<gene>
    <name type="primary">rpmD</name>
</gene>
<protein>
    <recommendedName>
        <fullName evidence="2">Large ribosomal subunit protein uL30</fullName>
    </recommendedName>
    <alternativeName>
        <fullName>50S ribosomal protein L30</fullName>
    </alternativeName>
</protein>
<proteinExistence type="evidence at protein level"/>
<comment type="subunit">
    <text evidence="1">Part of the 50S ribosomal subunit.</text>
</comment>
<comment type="similarity">
    <text evidence="2">Belongs to the universal ribosomal protein uL30 family.</text>
</comment>
<sequence>ATVKVTLVKSLNGRIANHKAXVXGL</sequence>
<keyword id="KW-0903">Direct protein sequencing</keyword>
<keyword id="KW-0687">Ribonucleoprotein</keyword>
<keyword id="KW-0689">Ribosomal protein</keyword>
<name>RL30_PSEPU</name>
<dbReference type="GO" id="GO:1990904">
    <property type="term" value="C:ribonucleoprotein complex"/>
    <property type="evidence" value="ECO:0007669"/>
    <property type="project" value="UniProtKB-KW"/>
</dbReference>
<dbReference type="GO" id="GO:0005840">
    <property type="term" value="C:ribosome"/>
    <property type="evidence" value="ECO:0007669"/>
    <property type="project" value="UniProtKB-KW"/>
</dbReference>
<feature type="chain" id="PRO_0000224007" description="Large ribosomal subunit protein uL30">
    <location>
        <begin position="1"/>
        <end position="25" status="greater than"/>
    </location>
</feature>
<feature type="non-terminal residue">
    <location>
        <position position="25"/>
    </location>
</feature>
<accession>Q9R4N6</accession>
<evidence type="ECO:0000250" key="1"/>
<evidence type="ECO:0000305" key="2"/>
<organism>
    <name type="scientific">Pseudomonas putida</name>
    <name type="common">Arthrobacter siderocapsulatus</name>
    <dbReference type="NCBI Taxonomy" id="303"/>
    <lineage>
        <taxon>Bacteria</taxon>
        <taxon>Pseudomonadati</taxon>
        <taxon>Pseudomonadota</taxon>
        <taxon>Gammaproteobacteria</taxon>
        <taxon>Pseudomonadales</taxon>
        <taxon>Pseudomonadaceae</taxon>
        <taxon>Pseudomonas</taxon>
    </lineage>
</organism>
<reference key="1">
    <citation type="journal article" date="1995" name="Int. J. Syst. Bacteriol.">
        <title>Comparative ribosomal protein sequence analyses of a phylogenetically defined genus, Pseudomonas, and its relatives.</title>
        <authorList>
            <person name="Ochi K."/>
        </authorList>
    </citation>
    <scope>PROTEIN SEQUENCE</scope>
    <source>
        <strain>ATCC 12633 / DSM 291 / JCM 13063 / CCUG 12690 / LMG 2257 / NBRC 14164 / NCIMB 9494 / NCTC 10936 / VKM B-2187 / Stanier 90</strain>
    </source>
</reference>